<proteinExistence type="evidence at transcript level"/>
<protein>
    <recommendedName>
        <fullName>Prokineticin receptor 1</fullName>
        <shortName>PK-R1</shortName>
    </recommendedName>
    <alternativeName>
        <fullName>G-protein coupled receptor 73</fullName>
    </alternativeName>
    <alternativeName>
        <fullName>G-protein coupled receptor ZAQ</fullName>
    </alternativeName>
</protein>
<reference key="1">
    <citation type="journal article" date="2002" name="Biochem. Biophys. Res. Commun.">
        <title>Isolation and identification of EG-VEGF/prokineticins as cognate ligands for two orphan G-protein-coupled receptors.</title>
        <authorList>
            <person name="Masuda Y."/>
            <person name="Takatsu Y."/>
            <person name="Terao Y."/>
            <person name="Kumano S."/>
            <person name="Ishibashi Y."/>
            <person name="Suenaga M."/>
            <person name="Abe M."/>
            <person name="Fukusumi S."/>
            <person name="Watanabe T."/>
            <person name="Shintani Y."/>
            <person name="Yamada T."/>
            <person name="Hinuma S."/>
            <person name="Inatomi N."/>
            <person name="Ohtaki T."/>
            <person name="Onda H."/>
            <person name="Fujino M."/>
        </authorList>
    </citation>
    <scope>NUCLEOTIDE SEQUENCE [MRNA]</scope>
</reference>
<comment type="function">
    <text evidence="1">Receptor for prokineticin 1. Exclusively coupled to the G(q) subclass of heteromeric G proteins. Activation leads to mobilization of calcium, stimulation of phosphoinositide turnover and activation of p44/p42 mitogen-activated protein kinase. May play a role during early pregnancy (By similarity).</text>
</comment>
<comment type="subcellular location">
    <subcellularLocation>
        <location>Cell membrane</location>
        <topology>Multi-pass membrane protein</topology>
    </subcellularLocation>
</comment>
<comment type="similarity">
    <text evidence="3">Belongs to the G-protein coupled receptor 1 family.</text>
</comment>
<gene>
    <name type="primary">PROKR1</name>
    <name type="synonym">GPR73</name>
    <name type="synonym">PKR1</name>
</gene>
<sequence>MEITMGVMDENATNTSTNYFPLLDPLGAQAASFPFNFSYGDYDMPLDEDEDMTNSRTFFAAKIVIGMALVGIMLVCGIGNFIFIAALARYKKLRNLTNLLIANLAISDFLVAIVCCPFEMDYYVVRQLSWEHGHVLCASVNYLRTVSLYVSTNALLAIAIDRYLAIVHPLRPRMKYQTATGLIALVWVVSILVAIPSAYFTTETVLVIVKSQEKIFCGQIWPVDQQIYYKSYFLFIFGIEFVGPVVTMTLCYARISRELWFKAVPGFQTEQIRKRLRCRRKTVLVLMCILTAYVLCWAPFYGFAIVRDFFPTVFVKEKHYLTAFYVVECIAMSNSMINTVCFVTVKNNTIKYFKKIMLLHWKASYNGSKSSGDLDLKTTGVPATEEVDCIGLK</sequence>
<accession>Q8SPN2</accession>
<dbReference type="EMBL" id="AY089972">
    <property type="protein sequence ID" value="AAM11888.1"/>
    <property type="molecule type" value="mRNA"/>
</dbReference>
<dbReference type="RefSeq" id="NP_776755.1">
    <property type="nucleotide sequence ID" value="NM_174330.1"/>
</dbReference>
<dbReference type="SMR" id="Q8SPN2"/>
<dbReference type="FunCoup" id="Q8SPN2">
    <property type="interactions" value="291"/>
</dbReference>
<dbReference type="STRING" id="9913.ENSBTAP00000067785"/>
<dbReference type="GlyCosmos" id="Q8SPN2">
    <property type="glycosylation" value="3 sites, No reported glycans"/>
</dbReference>
<dbReference type="GlyGen" id="Q8SPN2">
    <property type="glycosylation" value="3 sites"/>
</dbReference>
<dbReference type="PaxDb" id="9913-ENSBTAP00000027549"/>
<dbReference type="GeneID" id="281800"/>
<dbReference type="KEGG" id="bta:281800"/>
<dbReference type="CTD" id="10887"/>
<dbReference type="eggNOG" id="KOG3656">
    <property type="taxonomic scope" value="Eukaryota"/>
</dbReference>
<dbReference type="InParanoid" id="Q8SPN2"/>
<dbReference type="OrthoDB" id="10053194at2759"/>
<dbReference type="Proteomes" id="UP000009136">
    <property type="component" value="Unplaced"/>
</dbReference>
<dbReference type="GO" id="GO:0005886">
    <property type="term" value="C:plasma membrane"/>
    <property type="evidence" value="ECO:0000318"/>
    <property type="project" value="GO_Central"/>
</dbReference>
<dbReference type="GO" id="GO:0004930">
    <property type="term" value="F:G protein-coupled receptor activity"/>
    <property type="evidence" value="ECO:0000318"/>
    <property type="project" value="GO_Central"/>
</dbReference>
<dbReference type="GO" id="GO:0004983">
    <property type="term" value="F:neuropeptide Y receptor activity"/>
    <property type="evidence" value="ECO:0007669"/>
    <property type="project" value="InterPro"/>
</dbReference>
<dbReference type="GO" id="GO:0032870">
    <property type="term" value="P:cellular response to hormone stimulus"/>
    <property type="evidence" value="ECO:0000318"/>
    <property type="project" value="GO_Central"/>
</dbReference>
<dbReference type="GO" id="GO:0007623">
    <property type="term" value="P:circadian rhythm"/>
    <property type="evidence" value="ECO:0000318"/>
    <property type="project" value="GO_Central"/>
</dbReference>
<dbReference type="GO" id="GO:0007186">
    <property type="term" value="P:G protein-coupled receptor signaling pathway"/>
    <property type="evidence" value="ECO:0000318"/>
    <property type="project" value="GO_Central"/>
</dbReference>
<dbReference type="CDD" id="cd15204">
    <property type="entry name" value="7tmA_prokineticin-R"/>
    <property type="match status" value="1"/>
</dbReference>
<dbReference type="FunFam" id="1.20.1070.10:FF:000069">
    <property type="entry name" value="Prokineticin receptor 2"/>
    <property type="match status" value="1"/>
</dbReference>
<dbReference type="Gene3D" id="1.20.1070.10">
    <property type="entry name" value="Rhodopsin 7-helix transmembrane proteins"/>
    <property type="match status" value="1"/>
</dbReference>
<dbReference type="InterPro" id="IPR000276">
    <property type="entry name" value="GPCR_Rhodpsn"/>
</dbReference>
<dbReference type="InterPro" id="IPR017452">
    <property type="entry name" value="GPCR_Rhodpsn_7TM"/>
</dbReference>
<dbReference type="InterPro" id="IPR000611">
    <property type="entry name" value="NPY_rcpt"/>
</dbReference>
<dbReference type="PANTHER" id="PTHR24238">
    <property type="entry name" value="G-PROTEIN COUPLED RECEPTOR"/>
    <property type="match status" value="1"/>
</dbReference>
<dbReference type="PANTHER" id="PTHR24238:SF74">
    <property type="entry name" value="PROKINETICIN RECEPTOR 2"/>
    <property type="match status" value="1"/>
</dbReference>
<dbReference type="Pfam" id="PF00001">
    <property type="entry name" value="7tm_1"/>
    <property type="match status" value="1"/>
</dbReference>
<dbReference type="PRINTS" id="PR00237">
    <property type="entry name" value="GPCRRHODOPSN"/>
</dbReference>
<dbReference type="PRINTS" id="PR01012">
    <property type="entry name" value="NRPEPTIDEYR"/>
</dbReference>
<dbReference type="SUPFAM" id="SSF81321">
    <property type="entry name" value="Family A G protein-coupled receptor-like"/>
    <property type="match status" value="1"/>
</dbReference>
<dbReference type="PROSITE" id="PS00237">
    <property type="entry name" value="G_PROTEIN_RECEP_F1_1"/>
    <property type="match status" value="1"/>
</dbReference>
<dbReference type="PROSITE" id="PS50262">
    <property type="entry name" value="G_PROTEIN_RECEP_F1_2"/>
    <property type="match status" value="1"/>
</dbReference>
<feature type="chain" id="PRO_0000070078" description="Prokineticin receptor 1">
    <location>
        <begin position="1"/>
        <end position="393"/>
    </location>
</feature>
<feature type="topological domain" description="Extracellular" evidence="2">
    <location>
        <begin position="1"/>
        <end position="63"/>
    </location>
</feature>
<feature type="transmembrane region" description="Helical; Name=1" evidence="2">
    <location>
        <begin position="64"/>
        <end position="84"/>
    </location>
</feature>
<feature type="topological domain" description="Cytoplasmic" evidence="2">
    <location>
        <begin position="85"/>
        <end position="98"/>
    </location>
</feature>
<feature type="transmembrane region" description="Helical; Name=2" evidence="2">
    <location>
        <begin position="99"/>
        <end position="119"/>
    </location>
</feature>
<feature type="topological domain" description="Extracellular" evidence="2">
    <location>
        <begin position="120"/>
        <end position="145"/>
    </location>
</feature>
<feature type="transmembrane region" description="Helical; Name=3" evidence="2">
    <location>
        <begin position="146"/>
        <end position="166"/>
    </location>
</feature>
<feature type="topological domain" description="Cytoplasmic" evidence="2">
    <location>
        <begin position="167"/>
        <end position="179"/>
    </location>
</feature>
<feature type="transmembrane region" description="Helical; Name=4" evidence="2">
    <location>
        <begin position="180"/>
        <end position="200"/>
    </location>
</feature>
<feature type="topological domain" description="Extracellular" evidence="2">
    <location>
        <begin position="201"/>
        <end position="232"/>
    </location>
</feature>
<feature type="transmembrane region" description="Helical; Name=5" evidence="2">
    <location>
        <begin position="233"/>
        <end position="253"/>
    </location>
</feature>
<feature type="topological domain" description="Cytoplasmic" evidence="2">
    <location>
        <begin position="254"/>
        <end position="282"/>
    </location>
</feature>
<feature type="transmembrane region" description="Helical; Name=6" evidence="2">
    <location>
        <begin position="283"/>
        <end position="303"/>
    </location>
</feature>
<feature type="topological domain" description="Extracellular" evidence="2">
    <location>
        <begin position="304"/>
        <end position="322"/>
    </location>
</feature>
<feature type="transmembrane region" description="Helical; Name=7" evidence="2">
    <location>
        <begin position="323"/>
        <end position="343"/>
    </location>
</feature>
<feature type="topological domain" description="Cytoplasmic" evidence="2">
    <location>
        <begin position="344"/>
        <end position="393"/>
    </location>
</feature>
<feature type="glycosylation site" description="N-linked (GlcNAc...) asparagine" evidence="2">
    <location>
        <position position="11"/>
    </location>
</feature>
<feature type="glycosylation site" description="N-linked (GlcNAc...) asparagine" evidence="2">
    <location>
        <position position="14"/>
    </location>
</feature>
<feature type="glycosylation site" description="N-linked (GlcNAc...) asparagine" evidence="2">
    <location>
        <position position="36"/>
    </location>
</feature>
<feature type="disulfide bond" evidence="3">
    <location>
        <begin position="137"/>
        <end position="217"/>
    </location>
</feature>
<name>PKR1_BOVIN</name>
<organism>
    <name type="scientific">Bos taurus</name>
    <name type="common">Bovine</name>
    <dbReference type="NCBI Taxonomy" id="9913"/>
    <lineage>
        <taxon>Eukaryota</taxon>
        <taxon>Metazoa</taxon>
        <taxon>Chordata</taxon>
        <taxon>Craniata</taxon>
        <taxon>Vertebrata</taxon>
        <taxon>Euteleostomi</taxon>
        <taxon>Mammalia</taxon>
        <taxon>Eutheria</taxon>
        <taxon>Laurasiatheria</taxon>
        <taxon>Artiodactyla</taxon>
        <taxon>Ruminantia</taxon>
        <taxon>Pecora</taxon>
        <taxon>Bovidae</taxon>
        <taxon>Bovinae</taxon>
        <taxon>Bos</taxon>
    </lineage>
</organism>
<keyword id="KW-1003">Cell membrane</keyword>
<keyword id="KW-1015">Disulfide bond</keyword>
<keyword id="KW-0297">G-protein coupled receptor</keyword>
<keyword id="KW-0325">Glycoprotein</keyword>
<keyword id="KW-0472">Membrane</keyword>
<keyword id="KW-0675">Receptor</keyword>
<keyword id="KW-1185">Reference proteome</keyword>
<keyword id="KW-0807">Transducer</keyword>
<keyword id="KW-0812">Transmembrane</keyword>
<keyword id="KW-1133">Transmembrane helix</keyword>
<evidence type="ECO:0000250" key="1"/>
<evidence type="ECO:0000255" key="2"/>
<evidence type="ECO:0000255" key="3">
    <source>
        <dbReference type="PROSITE-ProRule" id="PRU00521"/>
    </source>
</evidence>